<evidence type="ECO:0000255" key="1">
    <source>
        <dbReference type="HAMAP-Rule" id="MF_00823"/>
    </source>
</evidence>
<evidence type="ECO:0000255" key="2">
    <source>
        <dbReference type="PROSITE-ProRule" id="PRU01137"/>
    </source>
</evidence>
<keyword id="KW-0067">ATP-binding</keyword>
<keyword id="KW-0963">Cytoplasm</keyword>
<keyword id="KW-0275">Fatty acid biosynthesis</keyword>
<keyword id="KW-0276">Fatty acid metabolism</keyword>
<keyword id="KW-0444">Lipid biosynthesis</keyword>
<keyword id="KW-0443">Lipid metabolism</keyword>
<keyword id="KW-0547">Nucleotide-binding</keyword>
<keyword id="KW-0808">Transferase</keyword>
<proteinExistence type="inferred from homology"/>
<reference key="1">
    <citation type="submission" date="2005-07" db="EMBL/GenBank/DDBJ databases">
        <title>Complete sequence of Synechococcus sp. CC9605.</title>
        <authorList>
            <consortium name="US DOE Joint Genome Institute"/>
            <person name="Copeland A."/>
            <person name="Lucas S."/>
            <person name="Lapidus A."/>
            <person name="Barry K."/>
            <person name="Detter J.C."/>
            <person name="Glavina T."/>
            <person name="Hammon N."/>
            <person name="Israni S."/>
            <person name="Pitluck S."/>
            <person name="Schmutz J."/>
            <person name="Martinez M."/>
            <person name="Larimer F."/>
            <person name="Land M."/>
            <person name="Kyrpides N."/>
            <person name="Ivanova N."/>
            <person name="Richardson P."/>
        </authorList>
    </citation>
    <scope>NUCLEOTIDE SEQUENCE [LARGE SCALE GENOMIC DNA]</scope>
    <source>
        <strain>CC9605</strain>
    </source>
</reference>
<gene>
    <name evidence="1" type="primary">accA</name>
    <name type="ordered locus">Syncc9605_0730</name>
</gene>
<feature type="chain" id="PRO_1000062693" description="Acetyl-coenzyme A carboxylase carboxyl transferase subunit alpha">
    <location>
        <begin position="1"/>
        <end position="329"/>
    </location>
</feature>
<feature type="domain" description="CoA carboxyltransferase C-terminal" evidence="2">
    <location>
        <begin position="40"/>
        <end position="294"/>
    </location>
</feature>
<protein>
    <recommendedName>
        <fullName evidence="1">Acetyl-coenzyme A carboxylase carboxyl transferase subunit alpha</fullName>
        <shortName evidence="1">ACCase subunit alpha</shortName>
        <shortName evidence="1">Acetyl-CoA carboxylase carboxyltransferase subunit alpha</shortName>
        <ecNumber evidence="1">2.1.3.15</ecNumber>
    </recommendedName>
</protein>
<accession>Q3ALN0</accession>
<organism>
    <name type="scientific">Synechococcus sp. (strain CC9605)</name>
    <dbReference type="NCBI Taxonomy" id="110662"/>
    <lineage>
        <taxon>Bacteria</taxon>
        <taxon>Bacillati</taxon>
        <taxon>Cyanobacteriota</taxon>
        <taxon>Cyanophyceae</taxon>
        <taxon>Synechococcales</taxon>
        <taxon>Synechococcaceae</taxon>
        <taxon>Synechococcus</taxon>
    </lineage>
</organism>
<sequence>MPRRPLLEFEKPLVELEQQIEQIRQLARDSEVDVSQQLQQLESLAARRRQEIFQGLTPAQKIQVARHPQRPSTLDFIQMFCDDWVELHGDRRGNDDQALIGGVGRVGNRAVMLIGHQKGRDTKENVARNFGMAAPGGYRKAMRLMDHADRFRLPILTFIDTPGAYAGLEAEEQGQGEAIAVNLREMFRLRVPVIATVIGEGGSGGALGIGVADRLLMFEHSVYTVASPEACASILWRDAAKAPDAAAALRITGRDLLELGVVDEVLEEPSGGNNWAPLEAGENLRAAIERHLEQLLSLSEQQLREARYSKFRAMGRFLEKTSQDVDKAA</sequence>
<name>ACCA_SYNSC</name>
<comment type="function">
    <text evidence="1">Component of the acetyl coenzyme A carboxylase (ACC) complex. First, biotin carboxylase catalyzes the carboxylation of biotin on its carrier protein (BCCP) and then the CO(2) group is transferred by the carboxyltransferase to acetyl-CoA to form malonyl-CoA.</text>
</comment>
<comment type="catalytic activity">
    <reaction evidence="1">
        <text>N(6)-carboxybiotinyl-L-lysyl-[protein] + acetyl-CoA = N(6)-biotinyl-L-lysyl-[protein] + malonyl-CoA</text>
        <dbReference type="Rhea" id="RHEA:54728"/>
        <dbReference type="Rhea" id="RHEA-COMP:10505"/>
        <dbReference type="Rhea" id="RHEA-COMP:10506"/>
        <dbReference type="ChEBI" id="CHEBI:57288"/>
        <dbReference type="ChEBI" id="CHEBI:57384"/>
        <dbReference type="ChEBI" id="CHEBI:83144"/>
        <dbReference type="ChEBI" id="CHEBI:83145"/>
        <dbReference type="EC" id="2.1.3.15"/>
    </reaction>
</comment>
<comment type="pathway">
    <text evidence="1">Lipid metabolism; malonyl-CoA biosynthesis; malonyl-CoA from acetyl-CoA: step 1/1.</text>
</comment>
<comment type="subunit">
    <text evidence="1">Acetyl-CoA carboxylase is a heterohexamer composed of biotin carboxyl carrier protein (AccB), biotin carboxylase (AccC) and two subunits each of ACCase subunit alpha (AccA) and ACCase subunit beta (AccD).</text>
</comment>
<comment type="subcellular location">
    <subcellularLocation>
        <location evidence="1">Cytoplasm</location>
    </subcellularLocation>
</comment>
<comment type="similarity">
    <text evidence="1">Belongs to the AccA family.</text>
</comment>
<dbReference type="EC" id="2.1.3.15" evidence="1"/>
<dbReference type="EMBL" id="CP000110">
    <property type="protein sequence ID" value="ABB34502.1"/>
    <property type="molecule type" value="Genomic_DNA"/>
</dbReference>
<dbReference type="RefSeq" id="WP_011363730.1">
    <property type="nucleotide sequence ID" value="NC_007516.1"/>
</dbReference>
<dbReference type="SMR" id="Q3ALN0"/>
<dbReference type="STRING" id="110662.Syncc9605_0730"/>
<dbReference type="KEGG" id="syd:Syncc9605_0730"/>
<dbReference type="eggNOG" id="COG0825">
    <property type="taxonomic scope" value="Bacteria"/>
</dbReference>
<dbReference type="HOGENOM" id="CLU_015486_0_2_3"/>
<dbReference type="OrthoDB" id="9808023at2"/>
<dbReference type="UniPathway" id="UPA00655">
    <property type="reaction ID" value="UER00711"/>
</dbReference>
<dbReference type="GO" id="GO:0009317">
    <property type="term" value="C:acetyl-CoA carboxylase complex"/>
    <property type="evidence" value="ECO:0007669"/>
    <property type="project" value="InterPro"/>
</dbReference>
<dbReference type="GO" id="GO:0003989">
    <property type="term" value="F:acetyl-CoA carboxylase activity"/>
    <property type="evidence" value="ECO:0007669"/>
    <property type="project" value="InterPro"/>
</dbReference>
<dbReference type="GO" id="GO:0005524">
    <property type="term" value="F:ATP binding"/>
    <property type="evidence" value="ECO:0007669"/>
    <property type="project" value="UniProtKB-KW"/>
</dbReference>
<dbReference type="GO" id="GO:0016743">
    <property type="term" value="F:carboxyl- or carbamoyltransferase activity"/>
    <property type="evidence" value="ECO:0007669"/>
    <property type="project" value="UniProtKB-UniRule"/>
</dbReference>
<dbReference type="GO" id="GO:0006633">
    <property type="term" value="P:fatty acid biosynthetic process"/>
    <property type="evidence" value="ECO:0007669"/>
    <property type="project" value="UniProtKB-KW"/>
</dbReference>
<dbReference type="GO" id="GO:2001295">
    <property type="term" value="P:malonyl-CoA biosynthetic process"/>
    <property type="evidence" value="ECO:0007669"/>
    <property type="project" value="UniProtKB-UniRule"/>
</dbReference>
<dbReference type="Gene3D" id="3.90.226.10">
    <property type="entry name" value="2-enoyl-CoA Hydratase, Chain A, domain 1"/>
    <property type="match status" value="1"/>
</dbReference>
<dbReference type="HAMAP" id="MF_00823">
    <property type="entry name" value="AcetylCoA_CT_alpha"/>
    <property type="match status" value="1"/>
</dbReference>
<dbReference type="InterPro" id="IPR001095">
    <property type="entry name" value="Acetyl_CoA_COase_a_su"/>
</dbReference>
<dbReference type="InterPro" id="IPR029045">
    <property type="entry name" value="ClpP/crotonase-like_dom_sf"/>
</dbReference>
<dbReference type="InterPro" id="IPR011763">
    <property type="entry name" value="COA_CT_C"/>
</dbReference>
<dbReference type="NCBIfam" id="TIGR00513">
    <property type="entry name" value="accA"/>
    <property type="match status" value="1"/>
</dbReference>
<dbReference type="NCBIfam" id="NF041504">
    <property type="entry name" value="AccA_sub"/>
    <property type="match status" value="1"/>
</dbReference>
<dbReference type="NCBIfam" id="NF004344">
    <property type="entry name" value="PRK05724.1"/>
    <property type="match status" value="1"/>
</dbReference>
<dbReference type="PANTHER" id="PTHR42853">
    <property type="entry name" value="ACETYL-COENZYME A CARBOXYLASE CARBOXYL TRANSFERASE SUBUNIT ALPHA"/>
    <property type="match status" value="1"/>
</dbReference>
<dbReference type="PANTHER" id="PTHR42853:SF3">
    <property type="entry name" value="ACETYL-COENZYME A CARBOXYLASE CARBOXYL TRANSFERASE SUBUNIT ALPHA, CHLOROPLASTIC"/>
    <property type="match status" value="1"/>
</dbReference>
<dbReference type="Pfam" id="PF03255">
    <property type="entry name" value="ACCA"/>
    <property type="match status" value="1"/>
</dbReference>
<dbReference type="PRINTS" id="PR01069">
    <property type="entry name" value="ACCCTRFRASEA"/>
</dbReference>
<dbReference type="SUPFAM" id="SSF52096">
    <property type="entry name" value="ClpP/crotonase"/>
    <property type="match status" value="1"/>
</dbReference>
<dbReference type="PROSITE" id="PS50989">
    <property type="entry name" value="COA_CT_CTER"/>
    <property type="match status" value="1"/>
</dbReference>